<evidence type="ECO:0000255" key="1">
    <source>
        <dbReference type="HAMAP-Rule" id="MF_01527"/>
    </source>
</evidence>
<name>GCH4_PSEP7</name>
<protein>
    <recommendedName>
        <fullName evidence="1">GTP cyclohydrolase FolE2</fullName>
        <ecNumber evidence="1">3.5.4.16</ecNumber>
    </recommendedName>
</protein>
<sequence>MNALTLPDIARQTTLSTLPLDWVGMQGIALPVQVAGQTVAAEADAGVSLDDPQARGIHMSRLYLALAGLEDGELDLPRLRGVLQRFLDSHADLSRRAYLRLRLAPLLRRPALVSPLSGWKRYPLVLDTRLENGTFQADLHLELTYSSTCPCSAALARQLIQERFAQDFAGQQPDHATILAWLGSSDGIVATPHSQRSSAQLRIGLAEDCAGLPLEELADLGECALGTAVQTAVKRADEQAFALANGQNLMFCEDAVRRLHRALRGYPQAREFSVRVVHAESLHAHDAVAESHWQRGAA</sequence>
<comment type="function">
    <text evidence="1">Converts GTP to 7,8-dihydroneopterin triphosphate.</text>
</comment>
<comment type="catalytic activity">
    <reaction evidence="1">
        <text>GTP + H2O = 7,8-dihydroneopterin 3'-triphosphate + formate + H(+)</text>
        <dbReference type="Rhea" id="RHEA:17473"/>
        <dbReference type="ChEBI" id="CHEBI:15377"/>
        <dbReference type="ChEBI" id="CHEBI:15378"/>
        <dbReference type="ChEBI" id="CHEBI:15740"/>
        <dbReference type="ChEBI" id="CHEBI:37565"/>
        <dbReference type="ChEBI" id="CHEBI:58462"/>
        <dbReference type="EC" id="3.5.4.16"/>
    </reaction>
</comment>
<comment type="pathway">
    <text evidence="1">Cofactor biosynthesis; 7,8-dihydroneopterin triphosphate biosynthesis; 7,8-dihydroneopterin triphosphate from GTP: step 1/1.</text>
</comment>
<comment type="similarity">
    <text evidence="1">Belongs to the GTP cyclohydrolase IV family.</text>
</comment>
<dbReference type="EC" id="3.5.4.16" evidence="1"/>
<dbReference type="EMBL" id="CP000744">
    <property type="protein sequence ID" value="ABR81478.1"/>
    <property type="molecule type" value="Genomic_DNA"/>
</dbReference>
<dbReference type="RefSeq" id="WP_003151584.1">
    <property type="nucleotide sequence ID" value="NC_009656.1"/>
</dbReference>
<dbReference type="SMR" id="A6VF17"/>
<dbReference type="KEGG" id="pap:PSPA7_6341"/>
<dbReference type="HOGENOM" id="CLU_062816_0_0_6"/>
<dbReference type="UniPathway" id="UPA00848">
    <property type="reaction ID" value="UER00151"/>
</dbReference>
<dbReference type="Proteomes" id="UP000001582">
    <property type="component" value="Chromosome"/>
</dbReference>
<dbReference type="GO" id="GO:0003934">
    <property type="term" value="F:GTP cyclohydrolase I activity"/>
    <property type="evidence" value="ECO:0007669"/>
    <property type="project" value="UniProtKB-UniRule"/>
</dbReference>
<dbReference type="GO" id="GO:0046654">
    <property type="term" value="P:tetrahydrofolate biosynthetic process"/>
    <property type="evidence" value="ECO:0007669"/>
    <property type="project" value="UniProtKB-UniRule"/>
</dbReference>
<dbReference type="Gene3D" id="3.10.270.10">
    <property type="entry name" value="Urate Oxidase"/>
    <property type="match status" value="1"/>
</dbReference>
<dbReference type="HAMAP" id="MF_01527_B">
    <property type="entry name" value="GTP_cyclohydrol_B"/>
    <property type="match status" value="1"/>
</dbReference>
<dbReference type="InterPro" id="IPR022838">
    <property type="entry name" value="GTP_cyclohydrolase_FolE2"/>
</dbReference>
<dbReference type="InterPro" id="IPR003801">
    <property type="entry name" value="GTP_cyclohydrolase_FolE2/MptA"/>
</dbReference>
<dbReference type="NCBIfam" id="NF010200">
    <property type="entry name" value="PRK13674.1-1"/>
    <property type="match status" value="1"/>
</dbReference>
<dbReference type="PANTHER" id="PTHR36445">
    <property type="entry name" value="GTP CYCLOHYDROLASE MPTA"/>
    <property type="match status" value="1"/>
</dbReference>
<dbReference type="PANTHER" id="PTHR36445:SF1">
    <property type="entry name" value="GTP CYCLOHYDROLASE MPTA"/>
    <property type="match status" value="1"/>
</dbReference>
<dbReference type="Pfam" id="PF02649">
    <property type="entry name" value="GCHY-1"/>
    <property type="match status" value="1"/>
</dbReference>
<gene>
    <name evidence="1" type="primary">folE2</name>
    <name type="ordered locus">PSPA7_6341</name>
</gene>
<proteinExistence type="inferred from homology"/>
<accession>A6VF17</accession>
<feature type="chain" id="PRO_0000316531" description="GTP cyclohydrolase FolE2">
    <location>
        <begin position="1"/>
        <end position="298"/>
    </location>
</feature>
<feature type="site" description="May be catalytically important" evidence="1">
    <location>
        <position position="149"/>
    </location>
</feature>
<organism>
    <name type="scientific">Pseudomonas paraeruginosa (strain DSM 24068 / PA7)</name>
    <name type="common">Pseudomonas aeruginosa (strain PA7)</name>
    <dbReference type="NCBI Taxonomy" id="381754"/>
    <lineage>
        <taxon>Bacteria</taxon>
        <taxon>Pseudomonadati</taxon>
        <taxon>Pseudomonadota</taxon>
        <taxon>Gammaproteobacteria</taxon>
        <taxon>Pseudomonadales</taxon>
        <taxon>Pseudomonadaceae</taxon>
        <taxon>Pseudomonas</taxon>
        <taxon>Pseudomonas paraeruginosa</taxon>
    </lineage>
</organism>
<keyword id="KW-0378">Hydrolase</keyword>
<reference key="1">
    <citation type="submission" date="2007-06" db="EMBL/GenBank/DDBJ databases">
        <authorList>
            <person name="Dodson R.J."/>
            <person name="Harkins D."/>
            <person name="Paulsen I.T."/>
        </authorList>
    </citation>
    <scope>NUCLEOTIDE SEQUENCE [LARGE SCALE GENOMIC DNA]</scope>
    <source>
        <strain>DSM 24068 / PA7</strain>
    </source>
</reference>